<reference key="1">
    <citation type="journal article" date="2003" name="Nat. Genet.">
        <title>Comparative analysis of the genome sequences of Bordetella pertussis, Bordetella parapertussis and Bordetella bronchiseptica.</title>
        <authorList>
            <person name="Parkhill J."/>
            <person name="Sebaihia M."/>
            <person name="Preston A."/>
            <person name="Murphy L.D."/>
            <person name="Thomson N.R."/>
            <person name="Harris D.E."/>
            <person name="Holden M.T.G."/>
            <person name="Churcher C.M."/>
            <person name="Bentley S.D."/>
            <person name="Mungall K.L."/>
            <person name="Cerdeno-Tarraga A.-M."/>
            <person name="Temple L."/>
            <person name="James K.D."/>
            <person name="Harris B."/>
            <person name="Quail M.A."/>
            <person name="Achtman M."/>
            <person name="Atkin R."/>
            <person name="Baker S."/>
            <person name="Basham D."/>
            <person name="Bason N."/>
            <person name="Cherevach I."/>
            <person name="Chillingworth T."/>
            <person name="Collins M."/>
            <person name="Cronin A."/>
            <person name="Davis P."/>
            <person name="Doggett J."/>
            <person name="Feltwell T."/>
            <person name="Goble A."/>
            <person name="Hamlin N."/>
            <person name="Hauser H."/>
            <person name="Holroyd S."/>
            <person name="Jagels K."/>
            <person name="Leather S."/>
            <person name="Moule S."/>
            <person name="Norberczak H."/>
            <person name="O'Neil S."/>
            <person name="Ormond D."/>
            <person name="Price C."/>
            <person name="Rabbinowitsch E."/>
            <person name="Rutter S."/>
            <person name="Sanders M."/>
            <person name="Saunders D."/>
            <person name="Seeger K."/>
            <person name="Sharp S."/>
            <person name="Simmonds M."/>
            <person name="Skelton J."/>
            <person name="Squares R."/>
            <person name="Squares S."/>
            <person name="Stevens K."/>
            <person name="Unwin L."/>
            <person name="Whitehead S."/>
            <person name="Barrell B.G."/>
            <person name="Maskell D.J."/>
        </authorList>
    </citation>
    <scope>NUCLEOTIDE SEQUENCE [LARGE SCALE GENOMIC DNA]</scope>
    <source>
        <strain>12822 / ATCC BAA-587 / NCTC 13253</strain>
    </source>
</reference>
<gene>
    <name evidence="1" type="primary">xseB</name>
    <name type="ordered locus">BPP2462</name>
</gene>
<evidence type="ECO:0000255" key="1">
    <source>
        <dbReference type="HAMAP-Rule" id="MF_00337"/>
    </source>
</evidence>
<organism>
    <name type="scientific">Bordetella parapertussis (strain 12822 / ATCC BAA-587 / NCTC 13253)</name>
    <dbReference type="NCBI Taxonomy" id="257311"/>
    <lineage>
        <taxon>Bacteria</taxon>
        <taxon>Pseudomonadati</taxon>
        <taxon>Pseudomonadota</taxon>
        <taxon>Betaproteobacteria</taxon>
        <taxon>Burkholderiales</taxon>
        <taxon>Alcaligenaceae</taxon>
        <taxon>Bordetella</taxon>
    </lineage>
</organism>
<name>EX7S_BORPA</name>
<protein>
    <recommendedName>
        <fullName evidence="1">Exodeoxyribonuclease 7 small subunit</fullName>
        <ecNumber evidence="1">3.1.11.6</ecNumber>
    </recommendedName>
    <alternativeName>
        <fullName evidence="1">Exodeoxyribonuclease VII small subunit</fullName>
        <shortName evidence="1">Exonuclease VII small subunit</shortName>
    </alternativeName>
</protein>
<dbReference type="EC" id="3.1.11.6" evidence="1"/>
<dbReference type="EMBL" id="BX640430">
    <property type="protein sequence ID" value="CAE37757.1"/>
    <property type="molecule type" value="Genomic_DNA"/>
</dbReference>
<dbReference type="RefSeq" id="WP_003813109.1">
    <property type="nucleotide sequence ID" value="NC_002928.3"/>
</dbReference>
<dbReference type="SMR" id="Q7W7Q2"/>
<dbReference type="KEGG" id="bpa:BPP2462"/>
<dbReference type="HOGENOM" id="CLU_145918_2_0_4"/>
<dbReference type="Proteomes" id="UP000001421">
    <property type="component" value="Chromosome"/>
</dbReference>
<dbReference type="GO" id="GO:0005829">
    <property type="term" value="C:cytosol"/>
    <property type="evidence" value="ECO:0007669"/>
    <property type="project" value="TreeGrafter"/>
</dbReference>
<dbReference type="GO" id="GO:0009318">
    <property type="term" value="C:exodeoxyribonuclease VII complex"/>
    <property type="evidence" value="ECO:0007669"/>
    <property type="project" value="InterPro"/>
</dbReference>
<dbReference type="GO" id="GO:0008855">
    <property type="term" value="F:exodeoxyribonuclease VII activity"/>
    <property type="evidence" value="ECO:0007669"/>
    <property type="project" value="UniProtKB-UniRule"/>
</dbReference>
<dbReference type="GO" id="GO:0006308">
    <property type="term" value="P:DNA catabolic process"/>
    <property type="evidence" value="ECO:0007669"/>
    <property type="project" value="UniProtKB-UniRule"/>
</dbReference>
<dbReference type="Gene3D" id="1.10.287.1040">
    <property type="entry name" value="Exonuclease VII, small subunit"/>
    <property type="match status" value="1"/>
</dbReference>
<dbReference type="HAMAP" id="MF_00337">
    <property type="entry name" value="Exonuc_7_S"/>
    <property type="match status" value="1"/>
</dbReference>
<dbReference type="InterPro" id="IPR003761">
    <property type="entry name" value="Exonuc_VII_S"/>
</dbReference>
<dbReference type="InterPro" id="IPR037004">
    <property type="entry name" value="Exonuc_VII_ssu_sf"/>
</dbReference>
<dbReference type="NCBIfam" id="NF002140">
    <property type="entry name" value="PRK00977.1-4"/>
    <property type="match status" value="1"/>
</dbReference>
<dbReference type="NCBIfam" id="NF002141">
    <property type="entry name" value="PRK00977.1-5"/>
    <property type="match status" value="1"/>
</dbReference>
<dbReference type="NCBIfam" id="TIGR01280">
    <property type="entry name" value="xseB"/>
    <property type="match status" value="1"/>
</dbReference>
<dbReference type="PANTHER" id="PTHR34137">
    <property type="entry name" value="EXODEOXYRIBONUCLEASE 7 SMALL SUBUNIT"/>
    <property type="match status" value="1"/>
</dbReference>
<dbReference type="PANTHER" id="PTHR34137:SF1">
    <property type="entry name" value="EXODEOXYRIBONUCLEASE 7 SMALL SUBUNIT"/>
    <property type="match status" value="1"/>
</dbReference>
<dbReference type="Pfam" id="PF02609">
    <property type="entry name" value="Exonuc_VII_S"/>
    <property type="match status" value="1"/>
</dbReference>
<dbReference type="PIRSF" id="PIRSF006488">
    <property type="entry name" value="Exonuc_VII_S"/>
    <property type="match status" value="1"/>
</dbReference>
<dbReference type="SUPFAM" id="SSF116842">
    <property type="entry name" value="XseB-like"/>
    <property type="match status" value="1"/>
</dbReference>
<comment type="function">
    <text evidence="1">Bidirectionally degrades single-stranded DNA into large acid-insoluble oligonucleotides, which are then degraded further into small acid-soluble oligonucleotides.</text>
</comment>
<comment type="catalytic activity">
    <reaction evidence="1">
        <text>Exonucleolytic cleavage in either 5'- to 3'- or 3'- to 5'-direction to yield nucleoside 5'-phosphates.</text>
        <dbReference type="EC" id="3.1.11.6"/>
    </reaction>
</comment>
<comment type="subunit">
    <text evidence="1">Heterooligomer composed of large and small subunits.</text>
</comment>
<comment type="subcellular location">
    <subcellularLocation>
        <location evidence="1">Cytoplasm</location>
    </subcellularLocation>
</comment>
<comment type="similarity">
    <text evidence="1">Belongs to the XseB family.</text>
</comment>
<accession>Q7W7Q2</accession>
<proteinExistence type="inferred from homology"/>
<sequence>MASSKQADPQTDARPLPQDFETALAELESLVSAMENGTLPLEQSLSAYRRGVELARVCQDRLAQAEQQVKVLEGDLLRPLDPAALDDE</sequence>
<keyword id="KW-0963">Cytoplasm</keyword>
<keyword id="KW-0269">Exonuclease</keyword>
<keyword id="KW-0378">Hydrolase</keyword>
<keyword id="KW-0540">Nuclease</keyword>
<feature type="chain" id="PRO_0000206926" description="Exodeoxyribonuclease 7 small subunit">
    <location>
        <begin position="1"/>
        <end position="88"/>
    </location>
</feature>